<accession>P26897</accession>
<proteinExistence type="evidence at transcript level"/>
<comment type="function">
    <text evidence="2">Receptor for interleukin-2. The receptor is involved in the regulation of immune tolerance by controlling regulatory T cells (TREGs) activity. TREGs suppress the activation and expansion of autoreactive T-cells.</text>
</comment>
<comment type="subunit">
    <text evidence="1">Non-covalent dimer of an alpha and a beta subunit. IL2R exists in 3 different forms: a high affinity dimer, an intermediate affinity monomer (beta subunit), and a low affinity monomer (alpha subunit). The high and intermediate affinity forms also associate with a gamma subunit (By similarity).</text>
</comment>
<comment type="subcellular location">
    <subcellularLocation>
        <location>Membrane</location>
        <topology>Single-pass type I membrane protein</topology>
    </subcellularLocation>
</comment>
<name>IL2RA_RAT</name>
<dbReference type="EMBL" id="M55049">
    <property type="protein sequence ID" value="AAA41428.1"/>
    <property type="molecule type" value="mRNA"/>
</dbReference>
<dbReference type="PIR" id="A46535">
    <property type="entry name" value="A46535"/>
</dbReference>
<dbReference type="RefSeq" id="NP_037295.1">
    <property type="nucleotide sequence ID" value="NM_013163.2"/>
</dbReference>
<dbReference type="SMR" id="P26897"/>
<dbReference type="FunCoup" id="P26897">
    <property type="interactions" value="379"/>
</dbReference>
<dbReference type="STRING" id="10116.ENSRNOP00000066383"/>
<dbReference type="GlyCosmos" id="P26897">
    <property type="glycosylation" value="2 sites, No reported glycans"/>
</dbReference>
<dbReference type="GlyGen" id="P26897">
    <property type="glycosylation" value="2 sites"/>
</dbReference>
<dbReference type="PhosphoSitePlus" id="P26897"/>
<dbReference type="PaxDb" id="10116-ENSRNOP00000066383"/>
<dbReference type="Ensembl" id="ENSRNOT00000073144.3">
    <property type="protein sequence ID" value="ENSRNOP00000066383.1"/>
    <property type="gene ID" value="ENSRNOG00000047647.3"/>
</dbReference>
<dbReference type="GeneID" id="25704"/>
<dbReference type="KEGG" id="rno:25704"/>
<dbReference type="UCSC" id="RGD:2895">
    <property type="organism name" value="rat"/>
</dbReference>
<dbReference type="AGR" id="RGD:2895"/>
<dbReference type="CTD" id="3559"/>
<dbReference type="RGD" id="2895">
    <property type="gene designation" value="Il2ra"/>
</dbReference>
<dbReference type="eggNOG" id="ENOG502SUAG">
    <property type="taxonomic scope" value="Eukaryota"/>
</dbReference>
<dbReference type="GeneTree" id="ENSGT00390000018872"/>
<dbReference type="HOGENOM" id="CLU_089677_1_0_1"/>
<dbReference type="InParanoid" id="P26897"/>
<dbReference type="OMA" id="TILNCEC"/>
<dbReference type="OrthoDB" id="85674at9989"/>
<dbReference type="PhylomeDB" id="P26897"/>
<dbReference type="Reactome" id="R-RNO-5673001">
    <property type="pathway name" value="RAF/MAP kinase cascade"/>
</dbReference>
<dbReference type="Reactome" id="R-RNO-9020558">
    <property type="pathway name" value="Interleukin-2 signaling"/>
</dbReference>
<dbReference type="Reactome" id="R-RNO-912526">
    <property type="pathway name" value="Interleukin receptor SHC signaling"/>
</dbReference>
<dbReference type="PRO" id="PR:P26897"/>
<dbReference type="Proteomes" id="UP000002494">
    <property type="component" value="Chromosome 17"/>
</dbReference>
<dbReference type="Bgee" id="ENSRNOG00000047647">
    <property type="expression patterns" value="Expressed in thymus and 11 other cell types or tissues"/>
</dbReference>
<dbReference type="GO" id="GO:0009986">
    <property type="term" value="C:cell surface"/>
    <property type="evidence" value="ECO:0000314"/>
    <property type="project" value="RGD"/>
</dbReference>
<dbReference type="GO" id="GO:0009897">
    <property type="term" value="C:external side of plasma membrane"/>
    <property type="evidence" value="ECO:0000266"/>
    <property type="project" value="RGD"/>
</dbReference>
<dbReference type="GO" id="GO:0019976">
    <property type="term" value="F:interleukin-2 binding"/>
    <property type="evidence" value="ECO:0000266"/>
    <property type="project" value="RGD"/>
</dbReference>
<dbReference type="GO" id="GO:0004911">
    <property type="term" value="F:interleukin-2 receptor activity"/>
    <property type="evidence" value="ECO:0000353"/>
    <property type="project" value="RGD"/>
</dbReference>
<dbReference type="GO" id="GO:0050798">
    <property type="term" value="P:activated T cell proliferation"/>
    <property type="evidence" value="ECO:0000266"/>
    <property type="project" value="RGD"/>
</dbReference>
<dbReference type="GO" id="GO:0006924">
    <property type="term" value="P:activation-induced cell death of T cells"/>
    <property type="evidence" value="ECO:0000266"/>
    <property type="project" value="RGD"/>
</dbReference>
<dbReference type="GO" id="GO:0006954">
    <property type="term" value="P:inflammatory response"/>
    <property type="evidence" value="ECO:0000318"/>
    <property type="project" value="GO_Central"/>
</dbReference>
<dbReference type="GO" id="GO:0002437">
    <property type="term" value="P:inflammatory response to antigenic stimulus"/>
    <property type="evidence" value="ECO:0000315"/>
    <property type="project" value="RGD"/>
</dbReference>
<dbReference type="GO" id="GO:0038110">
    <property type="term" value="P:interleukin-2-mediated signaling pathway"/>
    <property type="evidence" value="ECO:0000266"/>
    <property type="project" value="RGD"/>
</dbReference>
<dbReference type="GO" id="GO:0046651">
    <property type="term" value="P:lymphocyte proliferation"/>
    <property type="evidence" value="ECO:0000266"/>
    <property type="project" value="RGD"/>
</dbReference>
<dbReference type="GO" id="GO:0050728">
    <property type="term" value="P:negative regulation of inflammatory response"/>
    <property type="evidence" value="ECO:0000266"/>
    <property type="project" value="RGD"/>
</dbReference>
<dbReference type="GO" id="GO:0050672">
    <property type="term" value="P:negative regulation of lymphocyte proliferation"/>
    <property type="evidence" value="ECO:0000266"/>
    <property type="project" value="RGD"/>
</dbReference>
<dbReference type="GO" id="GO:0042130">
    <property type="term" value="P:negative regulation of T cell proliferation"/>
    <property type="evidence" value="ECO:0000266"/>
    <property type="project" value="RGD"/>
</dbReference>
<dbReference type="GO" id="GO:0007219">
    <property type="term" value="P:Notch signaling pathway"/>
    <property type="evidence" value="ECO:0000266"/>
    <property type="project" value="RGD"/>
</dbReference>
<dbReference type="GO" id="GO:0042104">
    <property type="term" value="P:positive regulation of activated T cell proliferation"/>
    <property type="evidence" value="ECO:0000266"/>
    <property type="project" value="RGD"/>
</dbReference>
<dbReference type="GO" id="GO:0045582">
    <property type="term" value="P:positive regulation of T cell differentiation"/>
    <property type="evidence" value="ECO:0000315"/>
    <property type="project" value="RGD"/>
</dbReference>
<dbReference type="GO" id="GO:0042102">
    <property type="term" value="P:positive regulation of T cell proliferation"/>
    <property type="evidence" value="ECO:0000315"/>
    <property type="project" value="RGD"/>
</dbReference>
<dbReference type="GO" id="GO:2000561">
    <property type="term" value="P:regulation of CD4-positive, alpha-beta T cell proliferation"/>
    <property type="evidence" value="ECO:0000266"/>
    <property type="project" value="RGD"/>
</dbReference>
<dbReference type="GO" id="GO:0046013">
    <property type="term" value="P:regulation of T cell homeostatic proliferation"/>
    <property type="evidence" value="ECO:0000266"/>
    <property type="project" value="RGD"/>
</dbReference>
<dbReference type="GO" id="GO:0002664">
    <property type="term" value="P:regulation of T cell tolerance induction"/>
    <property type="evidence" value="ECO:0000266"/>
    <property type="project" value="RGD"/>
</dbReference>
<dbReference type="GO" id="GO:0043029">
    <property type="term" value="P:T cell homeostasis"/>
    <property type="evidence" value="ECO:0000266"/>
    <property type="project" value="RGD"/>
</dbReference>
<dbReference type="CDD" id="cd00033">
    <property type="entry name" value="CCP"/>
    <property type="match status" value="1"/>
</dbReference>
<dbReference type="FunFam" id="2.20.28.230:FF:000002">
    <property type="entry name" value="Interleukin-2 receptor subunit alpha"/>
    <property type="match status" value="1"/>
</dbReference>
<dbReference type="Gene3D" id="2.20.28.230">
    <property type="match status" value="1"/>
</dbReference>
<dbReference type="Gene3D" id="2.10.70.10">
    <property type="entry name" value="Complement Module, domain 1"/>
    <property type="match status" value="1"/>
</dbReference>
<dbReference type="InterPro" id="IPR015486">
    <property type="entry name" value="IL-2_rcpt_alpha"/>
</dbReference>
<dbReference type="InterPro" id="IPR035976">
    <property type="entry name" value="Sushi/SCR/CCP_sf"/>
</dbReference>
<dbReference type="InterPro" id="IPR000436">
    <property type="entry name" value="Sushi_SCR_CCP_dom"/>
</dbReference>
<dbReference type="PANTHER" id="PTHR10573">
    <property type="entry name" value="INTERLEUKIN-2 RECEPTOR ALPHA CHAIN"/>
    <property type="match status" value="1"/>
</dbReference>
<dbReference type="PANTHER" id="PTHR10573:SF0">
    <property type="entry name" value="INTERLEUKIN-2 RECEPTOR SUBUNIT ALPHA"/>
    <property type="match status" value="1"/>
</dbReference>
<dbReference type="Pfam" id="PF00084">
    <property type="entry name" value="Sushi"/>
    <property type="match status" value="1"/>
</dbReference>
<dbReference type="SMART" id="SM00032">
    <property type="entry name" value="CCP"/>
    <property type="match status" value="2"/>
</dbReference>
<dbReference type="SUPFAM" id="SSF57535">
    <property type="entry name" value="Complement control module/SCR domain"/>
    <property type="match status" value="2"/>
</dbReference>
<dbReference type="PROSITE" id="PS50923">
    <property type="entry name" value="SUSHI"/>
    <property type="match status" value="2"/>
</dbReference>
<feature type="signal peptide" evidence="1">
    <location>
        <begin position="1"/>
        <end position="21"/>
    </location>
</feature>
<feature type="chain" id="PRO_0000011028" description="Interleukin-2 receptor subunit alpha">
    <location>
        <begin position="22"/>
        <end position="267"/>
    </location>
</feature>
<feature type="topological domain" description="Extracellular" evidence="3">
    <location>
        <begin position="22"/>
        <end position="235"/>
    </location>
</feature>
<feature type="transmembrane region" description="Helical" evidence="3">
    <location>
        <begin position="236"/>
        <end position="256"/>
    </location>
</feature>
<feature type="topological domain" description="Cytoplasmic" evidence="3">
    <location>
        <begin position="257"/>
        <end position="267"/>
    </location>
</feature>
<feature type="domain" description="Sushi 1" evidence="4">
    <location>
        <begin position="22"/>
        <end position="79"/>
    </location>
</feature>
<feature type="domain" description="Sushi 2" evidence="4">
    <location>
        <begin position="118"/>
        <end position="181"/>
    </location>
</feature>
<feature type="region of interest" description="Disordered" evidence="5">
    <location>
        <begin position="82"/>
        <end position="108"/>
    </location>
</feature>
<feature type="region of interest" description="Disordered" evidence="5">
    <location>
        <begin position="191"/>
        <end position="215"/>
    </location>
</feature>
<feature type="compositionally biased region" description="Polar residues" evidence="5">
    <location>
        <begin position="82"/>
        <end position="93"/>
    </location>
</feature>
<feature type="compositionally biased region" description="Low complexity" evidence="5">
    <location>
        <begin position="98"/>
        <end position="108"/>
    </location>
</feature>
<feature type="compositionally biased region" description="Polar residues" evidence="5">
    <location>
        <begin position="192"/>
        <end position="215"/>
    </location>
</feature>
<feature type="glycosylation site" description="N-linked (GlcNAc...) asparagine" evidence="3">
    <location>
        <position position="33"/>
    </location>
</feature>
<feature type="glycosylation site" description="N-linked (GlcNAc...) asparagine" evidence="3">
    <location>
        <position position="43"/>
    </location>
</feature>
<feature type="disulfide bond" evidence="4">
    <location>
        <begin position="24"/>
        <end position="66"/>
    </location>
</feature>
<feature type="disulfide bond" evidence="4">
    <location>
        <begin position="49"/>
        <end position="75"/>
    </location>
</feature>
<feature type="disulfide bond" evidence="4">
    <location>
        <begin position="51"/>
        <end position="77"/>
    </location>
</feature>
<feature type="disulfide bond" evidence="4">
    <location>
        <begin position="120"/>
        <end position="163"/>
    </location>
</feature>
<feature type="disulfide bond" evidence="4">
    <location>
        <begin position="147"/>
        <end position="179"/>
    </location>
</feature>
<sequence length="267" mass="30557">MEPHLLMLGFLSFTIVPGCWAELCLYDPPEVPNATFKALSYKNGTILNCECKRGFRRLNELVYMACLGNSWSNNCQCTSNSHDNSREQVTPQPEGQKEQQTTDTQKSTQSVYQENLAGHCREPPPWRHEDTKRIYHFVEGQIVLYTCIQGYKALQRGPAISICKTVCGEIRWTHPQLTCVDEKEHHQFLASEESQGSRNSFPESEASCPTPNTDFSQLTEATTTMETFVFTKEYQVAVASCIFLLLSILLLSGFTWQHRWRKSRRTI</sequence>
<reference key="1">
    <citation type="journal article" date="1991" name="Eur. J. Immunol.">
        <title>Molecular cloning of cDNAs for the rat interleukin 2 receptor alpha and beta chain genes: differentially regulated gene activity in response to mitogenic stimulation.</title>
        <authorList>
            <person name="Page T.H."/>
            <person name="Dallman M.J."/>
        </authorList>
    </citation>
    <scope>NUCLEOTIDE SEQUENCE [MRNA]</scope>
</reference>
<gene>
    <name type="primary">Il2ra</name>
</gene>
<evidence type="ECO:0000250" key="1"/>
<evidence type="ECO:0000250" key="2">
    <source>
        <dbReference type="UniProtKB" id="P01589"/>
    </source>
</evidence>
<evidence type="ECO:0000255" key="3"/>
<evidence type="ECO:0000255" key="4">
    <source>
        <dbReference type="PROSITE-ProRule" id="PRU00302"/>
    </source>
</evidence>
<evidence type="ECO:0000256" key="5">
    <source>
        <dbReference type="SAM" id="MobiDB-lite"/>
    </source>
</evidence>
<protein>
    <recommendedName>
        <fullName>Interleukin-2 receptor subunit alpha</fullName>
        <shortName>IL-2 receptor subunit alpha</shortName>
        <shortName>IL-2-RA</shortName>
        <shortName>IL-2R subunit alpha</shortName>
        <shortName>IL2-RA</shortName>
    </recommendedName>
    <cdAntigenName>CD25</cdAntigenName>
</protein>
<keyword id="KW-1015">Disulfide bond</keyword>
<keyword id="KW-0325">Glycoprotein</keyword>
<keyword id="KW-0391">Immunity</keyword>
<keyword id="KW-0472">Membrane</keyword>
<keyword id="KW-0675">Receptor</keyword>
<keyword id="KW-1185">Reference proteome</keyword>
<keyword id="KW-0677">Repeat</keyword>
<keyword id="KW-0732">Signal</keyword>
<keyword id="KW-0768">Sushi</keyword>
<keyword id="KW-0812">Transmembrane</keyword>
<keyword id="KW-1133">Transmembrane helix</keyword>
<organism>
    <name type="scientific">Rattus norvegicus</name>
    <name type="common">Rat</name>
    <dbReference type="NCBI Taxonomy" id="10116"/>
    <lineage>
        <taxon>Eukaryota</taxon>
        <taxon>Metazoa</taxon>
        <taxon>Chordata</taxon>
        <taxon>Craniata</taxon>
        <taxon>Vertebrata</taxon>
        <taxon>Euteleostomi</taxon>
        <taxon>Mammalia</taxon>
        <taxon>Eutheria</taxon>
        <taxon>Euarchontoglires</taxon>
        <taxon>Glires</taxon>
        <taxon>Rodentia</taxon>
        <taxon>Myomorpha</taxon>
        <taxon>Muroidea</taxon>
        <taxon>Muridae</taxon>
        <taxon>Murinae</taxon>
        <taxon>Rattus</taxon>
    </lineage>
</organism>